<proteinExistence type="inferred from homology"/>
<accession>A5CXV6</accession>
<dbReference type="EC" id="2.5.1.39" evidence="1"/>
<dbReference type="EMBL" id="AP009247">
    <property type="protein sequence ID" value="BAF61215.1"/>
    <property type="status" value="ALT_INIT"/>
    <property type="molecule type" value="Genomic_DNA"/>
</dbReference>
<dbReference type="RefSeq" id="WP_011929485.1">
    <property type="nucleotide sequence ID" value="NC_009465.1"/>
</dbReference>
<dbReference type="SMR" id="A5CXV6"/>
<dbReference type="STRING" id="412965.COSY_0079"/>
<dbReference type="KEGG" id="vok:COSY_0079"/>
<dbReference type="eggNOG" id="COG0382">
    <property type="taxonomic scope" value="Bacteria"/>
</dbReference>
<dbReference type="HOGENOM" id="CLU_034879_1_1_6"/>
<dbReference type="OrthoDB" id="9782418at2"/>
<dbReference type="UniPathway" id="UPA00232"/>
<dbReference type="Proteomes" id="UP000000247">
    <property type="component" value="Chromosome"/>
</dbReference>
<dbReference type="GO" id="GO:0005886">
    <property type="term" value="C:plasma membrane"/>
    <property type="evidence" value="ECO:0007669"/>
    <property type="project" value="UniProtKB-SubCell"/>
</dbReference>
<dbReference type="GO" id="GO:0008412">
    <property type="term" value="F:4-hydroxybenzoate polyprenyltransferase activity"/>
    <property type="evidence" value="ECO:0007669"/>
    <property type="project" value="UniProtKB-UniRule"/>
</dbReference>
<dbReference type="GO" id="GO:0006744">
    <property type="term" value="P:ubiquinone biosynthetic process"/>
    <property type="evidence" value="ECO:0007669"/>
    <property type="project" value="UniProtKB-UniRule"/>
</dbReference>
<dbReference type="CDD" id="cd13959">
    <property type="entry name" value="PT_UbiA_COQ2"/>
    <property type="match status" value="1"/>
</dbReference>
<dbReference type="FunFam" id="1.10.357.140:FF:000002">
    <property type="entry name" value="4-hydroxybenzoate octaprenyltransferase"/>
    <property type="match status" value="1"/>
</dbReference>
<dbReference type="FunFam" id="1.20.120.1780:FF:000001">
    <property type="entry name" value="4-hydroxybenzoate octaprenyltransferase"/>
    <property type="match status" value="1"/>
</dbReference>
<dbReference type="Gene3D" id="1.10.357.140">
    <property type="entry name" value="UbiA prenyltransferase"/>
    <property type="match status" value="1"/>
</dbReference>
<dbReference type="Gene3D" id="1.20.120.1780">
    <property type="entry name" value="UbiA prenyltransferase"/>
    <property type="match status" value="1"/>
</dbReference>
<dbReference type="HAMAP" id="MF_01635">
    <property type="entry name" value="UbiA"/>
    <property type="match status" value="1"/>
</dbReference>
<dbReference type="InterPro" id="IPR006370">
    <property type="entry name" value="HB_polyprenyltransferase-like"/>
</dbReference>
<dbReference type="InterPro" id="IPR039653">
    <property type="entry name" value="Prenyltransferase"/>
</dbReference>
<dbReference type="InterPro" id="IPR000537">
    <property type="entry name" value="UbiA_prenyltransferase"/>
</dbReference>
<dbReference type="InterPro" id="IPR030470">
    <property type="entry name" value="UbiA_prenylTrfase_CS"/>
</dbReference>
<dbReference type="InterPro" id="IPR044878">
    <property type="entry name" value="UbiA_sf"/>
</dbReference>
<dbReference type="NCBIfam" id="TIGR01474">
    <property type="entry name" value="ubiA_proteo"/>
    <property type="match status" value="1"/>
</dbReference>
<dbReference type="PANTHER" id="PTHR11048:SF28">
    <property type="entry name" value="4-HYDROXYBENZOATE POLYPRENYLTRANSFERASE, MITOCHONDRIAL"/>
    <property type="match status" value="1"/>
</dbReference>
<dbReference type="PANTHER" id="PTHR11048">
    <property type="entry name" value="PRENYLTRANSFERASES"/>
    <property type="match status" value="1"/>
</dbReference>
<dbReference type="Pfam" id="PF01040">
    <property type="entry name" value="UbiA"/>
    <property type="match status" value="1"/>
</dbReference>
<dbReference type="PROSITE" id="PS00943">
    <property type="entry name" value="UBIA"/>
    <property type="match status" value="1"/>
</dbReference>
<feature type="chain" id="PRO_0000336987" description="4-hydroxybenzoate octaprenyltransferase">
    <location>
        <begin position="1"/>
        <end position="273"/>
    </location>
</feature>
<feature type="transmembrane region" description="Helical" evidence="1">
    <location>
        <begin position="7"/>
        <end position="27"/>
    </location>
</feature>
<feature type="transmembrane region" description="Helical" evidence="1">
    <location>
        <begin position="30"/>
        <end position="50"/>
    </location>
</feature>
<feature type="transmembrane region" description="Helical" evidence="1">
    <location>
        <begin position="83"/>
        <end position="103"/>
    </location>
</feature>
<feature type="transmembrane region" description="Helical" evidence="1">
    <location>
        <begin position="122"/>
        <end position="142"/>
    </location>
</feature>
<feature type="transmembrane region" description="Helical" evidence="1">
    <location>
        <begin position="146"/>
        <end position="166"/>
    </location>
</feature>
<feature type="transmembrane region" description="Helical" evidence="1">
    <location>
        <begin position="197"/>
        <end position="217"/>
    </location>
</feature>
<feature type="transmembrane region" description="Helical" evidence="1">
    <location>
        <begin position="221"/>
        <end position="241"/>
    </location>
</feature>
<feature type="transmembrane region" description="Helical" evidence="1">
    <location>
        <begin position="253"/>
        <end position="273"/>
    </location>
</feature>
<evidence type="ECO:0000255" key="1">
    <source>
        <dbReference type="HAMAP-Rule" id="MF_01635"/>
    </source>
</evidence>
<evidence type="ECO:0000305" key="2"/>
<sequence>MRLDNPIGIYLLLWPTLWALFLASEGFPDLKLLLIFVLGVVLMRSAGCVINDYADRYIDKLVERTKHRPITSGEIHHRSALKFFVLLIMLAFLLVLLTNWLTIQLAMIAVLLAILYPFTKRWTYFPQFVLGLAFAMSVLMAFSATLNEIPITAWYVFAATVIWTVIYDTMYAMADREEDLKIGIKSSAILFAKFDRLIIGILQIIFLLILIKISNVFNLTISYHITLLLVTLLMIYHQYLIKNNENYSYLHGFLHNNYIGMVIFIGIVLSVGL</sequence>
<gene>
    <name evidence="1" type="primary">ubiA</name>
    <name type="ordered locus">COSY_0079</name>
</gene>
<protein>
    <recommendedName>
        <fullName evidence="1">4-hydroxybenzoate octaprenyltransferase</fullName>
        <ecNumber evidence="1">2.5.1.39</ecNumber>
    </recommendedName>
    <alternativeName>
        <fullName evidence="1">4-HB polyprenyltransferase</fullName>
    </alternativeName>
</protein>
<organism>
    <name type="scientific">Vesicomyosocius okutanii subsp. Calyptogena okutanii (strain HA)</name>
    <dbReference type="NCBI Taxonomy" id="412965"/>
    <lineage>
        <taxon>Bacteria</taxon>
        <taxon>Pseudomonadati</taxon>
        <taxon>Pseudomonadota</taxon>
        <taxon>Gammaproteobacteria</taxon>
        <taxon>Candidatus Pseudothioglobaceae</taxon>
        <taxon>Candidatus Vesicomyosocius</taxon>
    </lineage>
</organism>
<comment type="function">
    <text evidence="1">Catalyzes the prenylation of para-hydroxybenzoate (PHB) with an all-trans polyprenyl group. Mediates the second step in the final reaction sequence of ubiquinone-8 (UQ-8) biosynthesis, which is the condensation of the polyisoprenoid side chain with PHB, generating the first membrane-bound Q intermediate 3-octaprenyl-4-hydroxybenzoate.</text>
</comment>
<comment type="catalytic activity">
    <reaction evidence="1">
        <text>all-trans-octaprenyl diphosphate + 4-hydroxybenzoate = 4-hydroxy-3-(all-trans-octaprenyl)benzoate + diphosphate</text>
        <dbReference type="Rhea" id="RHEA:27782"/>
        <dbReference type="ChEBI" id="CHEBI:1617"/>
        <dbReference type="ChEBI" id="CHEBI:17879"/>
        <dbReference type="ChEBI" id="CHEBI:33019"/>
        <dbReference type="ChEBI" id="CHEBI:57711"/>
        <dbReference type="EC" id="2.5.1.39"/>
    </reaction>
</comment>
<comment type="cofactor">
    <cofactor evidence="1">
        <name>Mg(2+)</name>
        <dbReference type="ChEBI" id="CHEBI:18420"/>
    </cofactor>
</comment>
<comment type="pathway">
    <text evidence="1">Cofactor biosynthesis; ubiquinone biosynthesis.</text>
</comment>
<comment type="subcellular location">
    <subcellularLocation>
        <location evidence="1">Cell inner membrane</location>
        <topology evidence="1">Multi-pass membrane protein</topology>
    </subcellularLocation>
</comment>
<comment type="similarity">
    <text evidence="1">Belongs to the UbiA prenyltransferase family.</text>
</comment>
<comment type="sequence caution" evidence="2">
    <conflict type="erroneous initiation">
        <sequence resource="EMBL-CDS" id="BAF61215"/>
    </conflict>
</comment>
<name>UBIA_VESOH</name>
<reference key="1">
    <citation type="journal article" date="2007" name="Curr. Biol.">
        <title>Reduced genome of the thioautotrophic intracellular symbiont in a deep-sea clam, Calyptogena okutanii.</title>
        <authorList>
            <person name="Kuwahara H."/>
            <person name="Yoshida T."/>
            <person name="Takaki Y."/>
            <person name="Shimamura S."/>
            <person name="Nishi S."/>
            <person name="Harada M."/>
            <person name="Matsuyama K."/>
            <person name="Takishita K."/>
            <person name="Kawato M."/>
            <person name="Uematsu K."/>
            <person name="Fujiwara Y."/>
            <person name="Sato T."/>
            <person name="Kato C."/>
            <person name="Kitagawa M."/>
            <person name="Kato I."/>
            <person name="Maruyama T."/>
        </authorList>
    </citation>
    <scope>NUCLEOTIDE SEQUENCE [LARGE SCALE GENOMIC DNA]</scope>
    <source>
        <strain>HA</strain>
    </source>
</reference>
<keyword id="KW-0997">Cell inner membrane</keyword>
<keyword id="KW-1003">Cell membrane</keyword>
<keyword id="KW-0460">Magnesium</keyword>
<keyword id="KW-0472">Membrane</keyword>
<keyword id="KW-1185">Reference proteome</keyword>
<keyword id="KW-0808">Transferase</keyword>
<keyword id="KW-0812">Transmembrane</keyword>
<keyword id="KW-1133">Transmembrane helix</keyword>
<keyword id="KW-0831">Ubiquinone biosynthesis</keyword>